<sequence>MNQTLLSEYGTSSERVEHAINALRDGKGVMVLDNEDRENEGDIIFAAETMTVEQMALTIRYGSGIVCLCLTEERRQQLQLPMMVENNSSPFQTAFTVTIEAAQGVTTGVSAADRITTIRAAIADNAKPSDLNRPGHVFPLRAQPGGVLVRQGHTEAAIDLVSLAGFKPAGVLCELTNDDGSMARTLEVVQFAKLHNMPVVTIEDLVIYRQAIEQKAS</sequence>
<accession>Q7N0C8</accession>
<reference key="1">
    <citation type="journal article" date="2003" name="Nat. Biotechnol.">
        <title>The genome sequence of the entomopathogenic bacterium Photorhabdus luminescens.</title>
        <authorList>
            <person name="Duchaud E."/>
            <person name="Rusniok C."/>
            <person name="Frangeul L."/>
            <person name="Buchrieser C."/>
            <person name="Givaudan A."/>
            <person name="Taourit S."/>
            <person name="Bocs S."/>
            <person name="Boursaux-Eude C."/>
            <person name="Chandler M."/>
            <person name="Charles J.-F."/>
            <person name="Dassa E."/>
            <person name="Derose R."/>
            <person name="Derzelle S."/>
            <person name="Freyssinet G."/>
            <person name="Gaudriault S."/>
            <person name="Medigue C."/>
            <person name="Lanois A."/>
            <person name="Powell K."/>
            <person name="Siguier P."/>
            <person name="Vincent R."/>
            <person name="Wingate V."/>
            <person name="Zouine M."/>
            <person name="Glaser P."/>
            <person name="Boemare N."/>
            <person name="Danchin A."/>
            <person name="Kunst F."/>
        </authorList>
    </citation>
    <scope>NUCLEOTIDE SEQUENCE [LARGE SCALE GENOMIC DNA]</scope>
    <source>
        <strain>DSM 15139 / CIP 105565 / TT01</strain>
    </source>
</reference>
<gene>
    <name evidence="1" type="primary">ribB</name>
    <name type="ordered locus">plu3963</name>
</gene>
<keyword id="KW-0456">Lyase</keyword>
<keyword id="KW-0460">Magnesium</keyword>
<keyword id="KW-0464">Manganese</keyword>
<keyword id="KW-0479">Metal-binding</keyword>
<keyword id="KW-1185">Reference proteome</keyword>
<keyword id="KW-0686">Riboflavin biosynthesis</keyword>
<evidence type="ECO:0000255" key="1">
    <source>
        <dbReference type="HAMAP-Rule" id="MF_00180"/>
    </source>
</evidence>
<proteinExistence type="inferred from homology"/>
<dbReference type="EC" id="4.1.99.12" evidence="1"/>
<dbReference type="EMBL" id="BX571872">
    <property type="protein sequence ID" value="CAE16335.1"/>
    <property type="molecule type" value="Genomic_DNA"/>
</dbReference>
<dbReference type="RefSeq" id="WP_011148096.1">
    <property type="nucleotide sequence ID" value="NC_005126.1"/>
</dbReference>
<dbReference type="SMR" id="Q7N0C8"/>
<dbReference type="STRING" id="243265.plu3963"/>
<dbReference type="GeneID" id="48850189"/>
<dbReference type="KEGG" id="plu:plu3963"/>
<dbReference type="eggNOG" id="COG0108">
    <property type="taxonomic scope" value="Bacteria"/>
</dbReference>
<dbReference type="HOGENOM" id="CLU_020273_3_0_6"/>
<dbReference type="OrthoDB" id="9793111at2"/>
<dbReference type="UniPathway" id="UPA00275">
    <property type="reaction ID" value="UER00399"/>
</dbReference>
<dbReference type="Proteomes" id="UP000002514">
    <property type="component" value="Chromosome"/>
</dbReference>
<dbReference type="GO" id="GO:0005829">
    <property type="term" value="C:cytosol"/>
    <property type="evidence" value="ECO:0007669"/>
    <property type="project" value="TreeGrafter"/>
</dbReference>
<dbReference type="GO" id="GO:0008686">
    <property type="term" value="F:3,4-dihydroxy-2-butanone-4-phosphate synthase activity"/>
    <property type="evidence" value="ECO:0007669"/>
    <property type="project" value="UniProtKB-UniRule"/>
</dbReference>
<dbReference type="GO" id="GO:0000287">
    <property type="term" value="F:magnesium ion binding"/>
    <property type="evidence" value="ECO:0007669"/>
    <property type="project" value="UniProtKB-UniRule"/>
</dbReference>
<dbReference type="GO" id="GO:0030145">
    <property type="term" value="F:manganese ion binding"/>
    <property type="evidence" value="ECO:0007669"/>
    <property type="project" value="UniProtKB-UniRule"/>
</dbReference>
<dbReference type="GO" id="GO:0009231">
    <property type="term" value="P:riboflavin biosynthetic process"/>
    <property type="evidence" value="ECO:0007669"/>
    <property type="project" value="UniProtKB-UniRule"/>
</dbReference>
<dbReference type="FunFam" id="3.90.870.10:FF:000002">
    <property type="entry name" value="3,4-dihydroxy-2-butanone 4-phosphate synthase"/>
    <property type="match status" value="1"/>
</dbReference>
<dbReference type="Gene3D" id="3.90.870.10">
    <property type="entry name" value="DHBP synthase"/>
    <property type="match status" value="1"/>
</dbReference>
<dbReference type="HAMAP" id="MF_00180">
    <property type="entry name" value="RibB"/>
    <property type="match status" value="1"/>
</dbReference>
<dbReference type="InterPro" id="IPR017945">
    <property type="entry name" value="DHBP_synth_RibB-like_a/b_dom"/>
</dbReference>
<dbReference type="InterPro" id="IPR000422">
    <property type="entry name" value="DHBP_synthase_RibB"/>
</dbReference>
<dbReference type="NCBIfam" id="TIGR00506">
    <property type="entry name" value="ribB"/>
    <property type="match status" value="1"/>
</dbReference>
<dbReference type="PANTHER" id="PTHR21327:SF38">
    <property type="entry name" value="3,4-DIHYDROXY-2-BUTANONE 4-PHOSPHATE SYNTHASE"/>
    <property type="match status" value="1"/>
</dbReference>
<dbReference type="PANTHER" id="PTHR21327">
    <property type="entry name" value="GTP CYCLOHYDROLASE II-RELATED"/>
    <property type="match status" value="1"/>
</dbReference>
<dbReference type="Pfam" id="PF00926">
    <property type="entry name" value="DHBP_synthase"/>
    <property type="match status" value="1"/>
</dbReference>
<dbReference type="SUPFAM" id="SSF55821">
    <property type="entry name" value="YrdC/RibB"/>
    <property type="match status" value="1"/>
</dbReference>
<protein>
    <recommendedName>
        <fullName evidence="1">3,4-dihydroxy-2-butanone 4-phosphate synthase</fullName>
        <shortName evidence="1">DHBP synthase</shortName>
        <ecNumber evidence="1">4.1.99.12</ecNumber>
    </recommendedName>
</protein>
<comment type="function">
    <text evidence="1">Catalyzes the conversion of D-ribulose 5-phosphate to formate and 3,4-dihydroxy-2-butanone 4-phosphate.</text>
</comment>
<comment type="catalytic activity">
    <reaction evidence="1">
        <text>D-ribulose 5-phosphate = (2S)-2-hydroxy-3-oxobutyl phosphate + formate + H(+)</text>
        <dbReference type="Rhea" id="RHEA:18457"/>
        <dbReference type="ChEBI" id="CHEBI:15378"/>
        <dbReference type="ChEBI" id="CHEBI:15740"/>
        <dbReference type="ChEBI" id="CHEBI:58121"/>
        <dbReference type="ChEBI" id="CHEBI:58830"/>
        <dbReference type="EC" id="4.1.99.12"/>
    </reaction>
</comment>
<comment type="cofactor">
    <cofactor evidence="1">
        <name>Mg(2+)</name>
        <dbReference type="ChEBI" id="CHEBI:18420"/>
    </cofactor>
    <cofactor evidence="1">
        <name>Mn(2+)</name>
        <dbReference type="ChEBI" id="CHEBI:29035"/>
    </cofactor>
    <text evidence="1">Binds 2 divalent metal cations per subunit. Magnesium or manganese.</text>
</comment>
<comment type="pathway">
    <text evidence="1">Cofactor biosynthesis; riboflavin biosynthesis; 2-hydroxy-3-oxobutyl phosphate from D-ribulose 5-phosphate: step 1/1.</text>
</comment>
<comment type="subunit">
    <text evidence="1">Homodimer.</text>
</comment>
<comment type="similarity">
    <text evidence="1">Belongs to the DHBP synthase family.</text>
</comment>
<feature type="chain" id="PRO_0000151806" description="3,4-dihydroxy-2-butanone 4-phosphate synthase">
    <location>
        <begin position="1"/>
        <end position="217"/>
    </location>
</feature>
<feature type="binding site" evidence="1">
    <location>
        <begin position="37"/>
        <end position="38"/>
    </location>
    <ligand>
        <name>D-ribulose 5-phosphate</name>
        <dbReference type="ChEBI" id="CHEBI:58121"/>
    </ligand>
</feature>
<feature type="binding site" evidence="1">
    <location>
        <position position="38"/>
    </location>
    <ligand>
        <name>Mg(2+)</name>
        <dbReference type="ChEBI" id="CHEBI:18420"/>
        <label>1</label>
    </ligand>
</feature>
<feature type="binding site" evidence="1">
    <location>
        <position position="38"/>
    </location>
    <ligand>
        <name>Mg(2+)</name>
        <dbReference type="ChEBI" id="CHEBI:18420"/>
        <label>2</label>
    </ligand>
</feature>
<feature type="binding site" evidence="1">
    <location>
        <position position="42"/>
    </location>
    <ligand>
        <name>D-ribulose 5-phosphate</name>
        <dbReference type="ChEBI" id="CHEBI:58121"/>
    </ligand>
</feature>
<feature type="binding site" evidence="1">
    <location>
        <begin position="150"/>
        <end position="154"/>
    </location>
    <ligand>
        <name>D-ribulose 5-phosphate</name>
        <dbReference type="ChEBI" id="CHEBI:58121"/>
    </ligand>
</feature>
<feature type="binding site" evidence="1">
    <location>
        <position position="153"/>
    </location>
    <ligand>
        <name>Mg(2+)</name>
        <dbReference type="ChEBI" id="CHEBI:18420"/>
        <label>2</label>
    </ligand>
</feature>
<feature type="binding site" evidence="1">
    <location>
        <position position="174"/>
    </location>
    <ligand>
        <name>D-ribulose 5-phosphate</name>
        <dbReference type="ChEBI" id="CHEBI:58121"/>
    </ligand>
</feature>
<feature type="site" description="Essential for catalytic activity" evidence="1">
    <location>
        <position position="136"/>
    </location>
</feature>
<feature type="site" description="Essential for catalytic activity" evidence="1">
    <location>
        <position position="174"/>
    </location>
</feature>
<organism>
    <name type="scientific">Photorhabdus laumondii subsp. laumondii (strain DSM 15139 / CIP 105565 / TT01)</name>
    <name type="common">Photorhabdus luminescens subsp. laumondii</name>
    <dbReference type="NCBI Taxonomy" id="243265"/>
    <lineage>
        <taxon>Bacteria</taxon>
        <taxon>Pseudomonadati</taxon>
        <taxon>Pseudomonadota</taxon>
        <taxon>Gammaproteobacteria</taxon>
        <taxon>Enterobacterales</taxon>
        <taxon>Morganellaceae</taxon>
        <taxon>Photorhabdus</taxon>
    </lineage>
</organism>
<name>RIBB_PHOLL</name>